<comment type="subcellular location">
    <subcellularLocation>
        <location evidence="4">Membrane</location>
        <topology evidence="4">Single-pass type I membrane protein</topology>
    </subcellularLocation>
</comment>
<dbReference type="EMBL" id="AK138652">
    <property type="protein sequence ID" value="BAE23733.1"/>
    <property type="molecule type" value="mRNA"/>
</dbReference>
<dbReference type="EMBL" id="CU207396">
    <property type="protein sequence ID" value="CAQ51867.1"/>
    <property type="molecule type" value="Genomic_DNA"/>
</dbReference>
<dbReference type="CCDS" id="CCDS20705.1"/>
<dbReference type="RefSeq" id="NP_001030075.1">
    <property type="nucleotide sequence ID" value="NM_001034903.3"/>
</dbReference>
<dbReference type="SMR" id="Q3UU94"/>
<dbReference type="STRING" id="10090.ENSMUSP00000098343"/>
<dbReference type="GlyCosmos" id="Q3UU94">
    <property type="glycosylation" value="3 sites, No reported glycans"/>
</dbReference>
<dbReference type="GlyGen" id="Q3UU94">
    <property type="glycosylation" value="5 sites, 3 N-linked glycans (3 sites)"/>
</dbReference>
<dbReference type="iPTMnet" id="Q3UU94"/>
<dbReference type="PhosphoSitePlus" id="Q3UU94"/>
<dbReference type="PaxDb" id="10090-ENSMUSP00000098343"/>
<dbReference type="ProteomicsDB" id="295812"/>
<dbReference type="Antibodypedia" id="49381">
    <property type="antibodies" value="9 antibodies from 5 providers"/>
</dbReference>
<dbReference type="Ensembl" id="ENSMUST00000100780.3">
    <property type="protein sequence ID" value="ENSMUSP00000098343.3"/>
    <property type="gene ID" value="ENSMUSG00000072662.3"/>
</dbReference>
<dbReference type="GeneID" id="545893"/>
<dbReference type="KEGG" id="mmu:545893"/>
<dbReference type="UCSC" id="uc009est.1">
    <property type="organism name" value="mouse"/>
</dbReference>
<dbReference type="AGR" id="MGI:3645619"/>
<dbReference type="CTD" id="100287284"/>
<dbReference type="MGI" id="MGI:3645619">
    <property type="gene designation" value="Mansc4"/>
</dbReference>
<dbReference type="VEuPathDB" id="HostDB:ENSMUSG00000072662"/>
<dbReference type="eggNOG" id="ENOG502RZQD">
    <property type="taxonomic scope" value="Eukaryota"/>
</dbReference>
<dbReference type="GeneTree" id="ENSGT00940000153377"/>
<dbReference type="HOGENOM" id="CLU_071212_0_0_1"/>
<dbReference type="InParanoid" id="Q3UU94"/>
<dbReference type="OMA" id="IHDNINC"/>
<dbReference type="OrthoDB" id="9447308at2759"/>
<dbReference type="PhylomeDB" id="Q3UU94"/>
<dbReference type="TreeFam" id="TF353070"/>
<dbReference type="BioGRID-ORCS" id="545893">
    <property type="hits" value="3 hits in 77 CRISPR screens"/>
</dbReference>
<dbReference type="PRO" id="PR:Q3UU94"/>
<dbReference type="Proteomes" id="UP000000589">
    <property type="component" value="Chromosome 6"/>
</dbReference>
<dbReference type="RNAct" id="Q3UU94">
    <property type="molecule type" value="protein"/>
</dbReference>
<dbReference type="Bgee" id="ENSMUSG00000072662">
    <property type="expression patterns" value="Expressed in right kidney and 56 other cell types or tissues"/>
</dbReference>
<dbReference type="ExpressionAtlas" id="Q3UU94">
    <property type="expression patterns" value="baseline and differential"/>
</dbReference>
<dbReference type="GO" id="GO:0016020">
    <property type="term" value="C:membrane"/>
    <property type="evidence" value="ECO:0007669"/>
    <property type="project" value="UniProtKB-SubCell"/>
</dbReference>
<dbReference type="InterPro" id="IPR013980">
    <property type="entry name" value="MANSC_dom"/>
</dbReference>
<dbReference type="InterPro" id="IPR011106">
    <property type="entry name" value="MANSC_N"/>
</dbReference>
<dbReference type="PANTHER" id="PTHR46750">
    <property type="entry name" value="KUNITZ-TYPE PROTEASE INHIBITOR 1"/>
    <property type="match status" value="1"/>
</dbReference>
<dbReference type="PANTHER" id="PTHR46750:SF2">
    <property type="entry name" value="MANSC DOMAIN-CONTAINING PROTEIN 4"/>
    <property type="match status" value="1"/>
</dbReference>
<dbReference type="Pfam" id="PF07502">
    <property type="entry name" value="MANEC"/>
    <property type="match status" value="1"/>
</dbReference>
<dbReference type="SMART" id="SM00765">
    <property type="entry name" value="MANEC"/>
    <property type="match status" value="1"/>
</dbReference>
<dbReference type="PROSITE" id="PS50986">
    <property type="entry name" value="MANSC"/>
    <property type="match status" value="1"/>
</dbReference>
<accession>Q3UU94</accession>
<accession>B2KFS6</accession>
<proteinExistence type="evidence at transcript level"/>
<protein>
    <recommendedName>
        <fullName>MANSC domain-containing protein 4</fullName>
    </recommendedName>
</protein>
<evidence type="ECO:0000255" key="1"/>
<evidence type="ECO:0000255" key="2">
    <source>
        <dbReference type="PROSITE-ProRule" id="PRU00341"/>
    </source>
</evidence>
<evidence type="ECO:0000256" key="3">
    <source>
        <dbReference type="SAM" id="MobiDB-lite"/>
    </source>
</evidence>
<evidence type="ECO:0000305" key="4"/>
<sequence length="337" mass="36857">MRAVELLLLLGLASMVHGLCSPTVFYRDCWIRRFPGMLLDLEESQRLGAQFLKYYSENTGQKCGRSCCLRKDVSCNVAVFFHDPVHDNVNCLHVHCPTLESCILEPGASAILYNITAGIDPDLLVFEHTSPIYPNSRSSSEWWDRLRILKAMSVGSEGVYPDVMNRMVPSTEAASTTQQDLGANTGISYSRKSTTDVGLRFTSANVSTATKVNMVSPSTDFTHSPGNKTISPFFGPTDTRVSQVPSRSRLNISKPSVNKTKGSHSRNHSSENEEPWDGAPASAGVWLACVTLGAAVISLCCRVVLGTSRCCGKRQGWSHMGQRSASGCRRNTLKENS</sequence>
<reference key="1">
    <citation type="journal article" date="2005" name="Science">
        <title>The transcriptional landscape of the mammalian genome.</title>
        <authorList>
            <person name="Carninci P."/>
            <person name="Kasukawa T."/>
            <person name="Katayama S."/>
            <person name="Gough J."/>
            <person name="Frith M.C."/>
            <person name="Maeda N."/>
            <person name="Oyama R."/>
            <person name="Ravasi T."/>
            <person name="Lenhard B."/>
            <person name="Wells C."/>
            <person name="Kodzius R."/>
            <person name="Shimokawa K."/>
            <person name="Bajic V.B."/>
            <person name="Brenner S.E."/>
            <person name="Batalov S."/>
            <person name="Forrest A.R."/>
            <person name="Zavolan M."/>
            <person name="Davis M.J."/>
            <person name="Wilming L.G."/>
            <person name="Aidinis V."/>
            <person name="Allen J.E."/>
            <person name="Ambesi-Impiombato A."/>
            <person name="Apweiler R."/>
            <person name="Aturaliya R.N."/>
            <person name="Bailey T.L."/>
            <person name="Bansal M."/>
            <person name="Baxter L."/>
            <person name="Beisel K.W."/>
            <person name="Bersano T."/>
            <person name="Bono H."/>
            <person name="Chalk A.M."/>
            <person name="Chiu K.P."/>
            <person name="Choudhary V."/>
            <person name="Christoffels A."/>
            <person name="Clutterbuck D.R."/>
            <person name="Crowe M.L."/>
            <person name="Dalla E."/>
            <person name="Dalrymple B.P."/>
            <person name="de Bono B."/>
            <person name="Della Gatta G."/>
            <person name="di Bernardo D."/>
            <person name="Down T."/>
            <person name="Engstrom P."/>
            <person name="Fagiolini M."/>
            <person name="Faulkner G."/>
            <person name="Fletcher C.F."/>
            <person name="Fukushima T."/>
            <person name="Furuno M."/>
            <person name="Futaki S."/>
            <person name="Gariboldi M."/>
            <person name="Georgii-Hemming P."/>
            <person name="Gingeras T.R."/>
            <person name="Gojobori T."/>
            <person name="Green R.E."/>
            <person name="Gustincich S."/>
            <person name="Harbers M."/>
            <person name="Hayashi Y."/>
            <person name="Hensch T.K."/>
            <person name="Hirokawa N."/>
            <person name="Hill D."/>
            <person name="Huminiecki L."/>
            <person name="Iacono M."/>
            <person name="Ikeo K."/>
            <person name="Iwama A."/>
            <person name="Ishikawa T."/>
            <person name="Jakt M."/>
            <person name="Kanapin A."/>
            <person name="Katoh M."/>
            <person name="Kawasawa Y."/>
            <person name="Kelso J."/>
            <person name="Kitamura H."/>
            <person name="Kitano H."/>
            <person name="Kollias G."/>
            <person name="Krishnan S.P."/>
            <person name="Kruger A."/>
            <person name="Kummerfeld S.K."/>
            <person name="Kurochkin I.V."/>
            <person name="Lareau L.F."/>
            <person name="Lazarevic D."/>
            <person name="Lipovich L."/>
            <person name="Liu J."/>
            <person name="Liuni S."/>
            <person name="McWilliam S."/>
            <person name="Madan Babu M."/>
            <person name="Madera M."/>
            <person name="Marchionni L."/>
            <person name="Matsuda H."/>
            <person name="Matsuzawa S."/>
            <person name="Miki H."/>
            <person name="Mignone F."/>
            <person name="Miyake S."/>
            <person name="Morris K."/>
            <person name="Mottagui-Tabar S."/>
            <person name="Mulder N."/>
            <person name="Nakano N."/>
            <person name="Nakauchi H."/>
            <person name="Ng P."/>
            <person name="Nilsson R."/>
            <person name="Nishiguchi S."/>
            <person name="Nishikawa S."/>
            <person name="Nori F."/>
            <person name="Ohara O."/>
            <person name="Okazaki Y."/>
            <person name="Orlando V."/>
            <person name="Pang K.C."/>
            <person name="Pavan W.J."/>
            <person name="Pavesi G."/>
            <person name="Pesole G."/>
            <person name="Petrovsky N."/>
            <person name="Piazza S."/>
            <person name="Reed J."/>
            <person name="Reid J.F."/>
            <person name="Ring B.Z."/>
            <person name="Ringwald M."/>
            <person name="Rost B."/>
            <person name="Ruan Y."/>
            <person name="Salzberg S.L."/>
            <person name="Sandelin A."/>
            <person name="Schneider C."/>
            <person name="Schoenbach C."/>
            <person name="Sekiguchi K."/>
            <person name="Semple C.A."/>
            <person name="Seno S."/>
            <person name="Sessa L."/>
            <person name="Sheng Y."/>
            <person name="Shibata Y."/>
            <person name="Shimada H."/>
            <person name="Shimada K."/>
            <person name="Silva D."/>
            <person name="Sinclair B."/>
            <person name="Sperling S."/>
            <person name="Stupka E."/>
            <person name="Sugiura K."/>
            <person name="Sultana R."/>
            <person name="Takenaka Y."/>
            <person name="Taki K."/>
            <person name="Tammoja K."/>
            <person name="Tan S.L."/>
            <person name="Tang S."/>
            <person name="Taylor M.S."/>
            <person name="Tegner J."/>
            <person name="Teichmann S.A."/>
            <person name="Ueda H.R."/>
            <person name="van Nimwegen E."/>
            <person name="Verardo R."/>
            <person name="Wei C.L."/>
            <person name="Yagi K."/>
            <person name="Yamanishi H."/>
            <person name="Zabarovsky E."/>
            <person name="Zhu S."/>
            <person name="Zimmer A."/>
            <person name="Hide W."/>
            <person name="Bult C."/>
            <person name="Grimmond S.M."/>
            <person name="Teasdale R.D."/>
            <person name="Liu E.T."/>
            <person name="Brusic V."/>
            <person name="Quackenbush J."/>
            <person name="Wahlestedt C."/>
            <person name="Mattick J.S."/>
            <person name="Hume D.A."/>
            <person name="Kai C."/>
            <person name="Sasaki D."/>
            <person name="Tomaru Y."/>
            <person name="Fukuda S."/>
            <person name="Kanamori-Katayama M."/>
            <person name="Suzuki M."/>
            <person name="Aoki J."/>
            <person name="Arakawa T."/>
            <person name="Iida J."/>
            <person name="Imamura K."/>
            <person name="Itoh M."/>
            <person name="Kato T."/>
            <person name="Kawaji H."/>
            <person name="Kawagashira N."/>
            <person name="Kawashima T."/>
            <person name="Kojima M."/>
            <person name="Kondo S."/>
            <person name="Konno H."/>
            <person name="Nakano K."/>
            <person name="Ninomiya N."/>
            <person name="Nishio T."/>
            <person name="Okada M."/>
            <person name="Plessy C."/>
            <person name="Shibata K."/>
            <person name="Shiraki T."/>
            <person name="Suzuki S."/>
            <person name="Tagami M."/>
            <person name="Waki K."/>
            <person name="Watahiki A."/>
            <person name="Okamura-Oho Y."/>
            <person name="Suzuki H."/>
            <person name="Kawai J."/>
            <person name="Hayashizaki Y."/>
        </authorList>
    </citation>
    <scope>NUCLEOTIDE SEQUENCE [LARGE SCALE MRNA]</scope>
    <source>
        <strain>C57BL/6J</strain>
        <tissue>Spinal cord</tissue>
    </source>
</reference>
<reference key="2">
    <citation type="journal article" date="2009" name="PLoS Biol.">
        <title>Lineage-specific biology revealed by a finished genome assembly of the mouse.</title>
        <authorList>
            <person name="Church D.M."/>
            <person name="Goodstadt L."/>
            <person name="Hillier L.W."/>
            <person name="Zody M.C."/>
            <person name="Goldstein S."/>
            <person name="She X."/>
            <person name="Bult C.J."/>
            <person name="Agarwala R."/>
            <person name="Cherry J.L."/>
            <person name="DiCuccio M."/>
            <person name="Hlavina W."/>
            <person name="Kapustin Y."/>
            <person name="Meric P."/>
            <person name="Maglott D."/>
            <person name="Birtle Z."/>
            <person name="Marques A.C."/>
            <person name="Graves T."/>
            <person name="Zhou S."/>
            <person name="Teague B."/>
            <person name="Potamousis K."/>
            <person name="Churas C."/>
            <person name="Place M."/>
            <person name="Herschleb J."/>
            <person name="Runnheim R."/>
            <person name="Forrest D."/>
            <person name="Amos-Landgraf J."/>
            <person name="Schwartz D.C."/>
            <person name="Cheng Z."/>
            <person name="Lindblad-Toh K."/>
            <person name="Eichler E.E."/>
            <person name="Ponting C.P."/>
        </authorList>
    </citation>
    <scope>NUCLEOTIDE SEQUENCE [LARGE SCALE GENOMIC DNA]</scope>
    <source>
        <strain>NOD/LtJ</strain>
    </source>
</reference>
<name>MANS4_MOUSE</name>
<keyword id="KW-0325">Glycoprotein</keyword>
<keyword id="KW-0472">Membrane</keyword>
<keyword id="KW-1185">Reference proteome</keyword>
<keyword id="KW-0732">Signal</keyword>
<keyword id="KW-0812">Transmembrane</keyword>
<keyword id="KW-1133">Transmembrane helix</keyword>
<gene>
    <name type="primary">Mansc4</name>
    <name type="synonym">Gm5887</name>
</gene>
<feature type="signal peptide" evidence="1">
    <location>
        <begin position="1"/>
        <end position="18"/>
    </location>
</feature>
<feature type="chain" id="PRO_0000349177" description="MANSC domain-containing protein 4">
    <location>
        <begin position="19"/>
        <end position="337"/>
    </location>
</feature>
<feature type="topological domain" description="Extracellular" evidence="1">
    <location>
        <begin position="19"/>
        <end position="278"/>
    </location>
</feature>
<feature type="transmembrane region" description="Helical" evidence="1">
    <location>
        <begin position="279"/>
        <end position="299"/>
    </location>
</feature>
<feature type="topological domain" description="Cytoplasmic" evidence="1">
    <location>
        <begin position="300"/>
        <end position="337"/>
    </location>
</feature>
<feature type="domain" description="MANSC" evidence="2">
    <location>
        <begin position="33"/>
        <end position="113"/>
    </location>
</feature>
<feature type="region of interest" description="Disordered" evidence="3">
    <location>
        <begin position="216"/>
        <end position="277"/>
    </location>
</feature>
<feature type="region of interest" description="Disordered" evidence="3">
    <location>
        <begin position="314"/>
        <end position="337"/>
    </location>
</feature>
<feature type="compositionally biased region" description="Polar residues" evidence="3">
    <location>
        <begin position="216"/>
        <end position="230"/>
    </location>
</feature>
<feature type="compositionally biased region" description="Polar residues" evidence="3">
    <location>
        <begin position="239"/>
        <end position="260"/>
    </location>
</feature>
<feature type="glycosylation site" description="N-linked (GlcNAc...) asparagine" evidence="1">
    <location>
        <position position="114"/>
    </location>
</feature>
<feature type="glycosylation site" description="N-linked (GlcNAc...) asparagine" evidence="1">
    <location>
        <position position="227"/>
    </location>
</feature>
<feature type="glycosylation site" description="N-linked (GlcNAc...) asparagine" evidence="1">
    <location>
        <position position="251"/>
    </location>
</feature>
<feature type="sequence conflict" description="In Ref. 2; CAQ51867." evidence="4" ref="2">
    <original>S</original>
    <variation>T</variation>
    <location>
        <position position="136"/>
    </location>
</feature>
<feature type="sequence conflict" description="In Ref. 2; CAQ51867." evidence="4" ref="2">
    <original>S</original>
    <variation>T</variation>
    <location>
        <position position="153"/>
    </location>
</feature>
<feature type="sequence conflict" description="In Ref. 2; CAQ51867." evidence="4" ref="2">
    <original>P</original>
    <variation>S</variation>
    <location>
        <position position="169"/>
    </location>
</feature>
<feature type="sequence conflict" description="In Ref. 2; CAQ51867." evidence="4" ref="2">
    <original>A</original>
    <variation>P</variation>
    <location>
        <position position="174"/>
    </location>
</feature>
<feature type="sequence conflict" description="In Ref. 2; CAQ51867." evidence="4" ref="2">
    <original>T</original>
    <variation>I</variation>
    <location>
        <position position="176"/>
    </location>
</feature>
<feature type="sequence conflict" description="In Ref. 2; CAQ51867." evidence="4" ref="2">
    <original>L</original>
    <variation>I</variation>
    <location>
        <position position="199"/>
    </location>
</feature>
<feature type="sequence conflict" description="In Ref. 2; CAQ51867." evidence="4" ref="2">
    <original>N</original>
    <variation>T</variation>
    <location>
        <position position="205"/>
    </location>
</feature>
<feature type="sequence conflict" description="In Ref. 2; CAQ51867." evidence="4" ref="2">
    <original>K</original>
    <variation>N</variation>
    <location>
        <position position="259"/>
    </location>
</feature>
<feature type="sequence conflict" description="In Ref. 2; CAQ51867." evidence="4" ref="2">
    <original>W</original>
    <variation>R</variation>
    <location>
        <position position="276"/>
    </location>
</feature>
<feature type="sequence conflict" description="In Ref. 2; CAQ51867." evidence="4" ref="2">
    <original>I</original>
    <variation>V</variation>
    <location>
        <position position="297"/>
    </location>
</feature>
<feature type="sequence conflict" description="In Ref. 2; CAQ51867." evidence="4" ref="2">
    <original>R</original>
    <variation>Q</variation>
    <location>
        <position position="314"/>
    </location>
</feature>
<feature type="sequence conflict" description="In Ref. 2; CAQ51867." evidence="4" ref="2">
    <original>R</original>
    <variation>H</variation>
    <location>
        <position position="330"/>
    </location>
</feature>
<organism>
    <name type="scientific">Mus musculus</name>
    <name type="common">Mouse</name>
    <dbReference type="NCBI Taxonomy" id="10090"/>
    <lineage>
        <taxon>Eukaryota</taxon>
        <taxon>Metazoa</taxon>
        <taxon>Chordata</taxon>
        <taxon>Craniata</taxon>
        <taxon>Vertebrata</taxon>
        <taxon>Euteleostomi</taxon>
        <taxon>Mammalia</taxon>
        <taxon>Eutheria</taxon>
        <taxon>Euarchontoglires</taxon>
        <taxon>Glires</taxon>
        <taxon>Rodentia</taxon>
        <taxon>Myomorpha</taxon>
        <taxon>Muroidea</taxon>
        <taxon>Muridae</taxon>
        <taxon>Murinae</taxon>
        <taxon>Mus</taxon>
        <taxon>Mus</taxon>
    </lineage>
</organism>